<feature type="chain" id="PRO_0000330830" description="Protein odr-4 homolog">
    <location>
        <begin position="1"/>
        <end position="456"/>
    </location>
</feature>
<feature type="transmembrane region" description="Helical" evidence="2">
    <location>
        <begin position="436"/>
        <end position="456"/>
    </location>
</feature>
<feature type="region of interest" description="Disordered" evidence="3">
    <location>
        <begin position="374"/>
        <end position="403"/>
    </location>
</feature>
<feature type="compositionally biased region" description="Low complexity" evidence="3">
    <location>
        <begin position="374"/>
        <end position="401"/>
    </location>
</feature>
<sequence>MIINSNIKITLEERSNKLEQSHIEIGLLIGQESEISEQQTFVLGLFPTPLNISNTDDDNNNKPINIDSISSIDKEWILEYCHQVNIMLYGGIDIVGIYMIIPDSDTLNEKNNESFIMKLLKSIHTIINSKSLQFISYSKKTGLINGKATNSTQLYRLKSTEIKVINNLENEFLSLHCILPIDIKLKSKNGMISFENLKKDIIEIFENQLFKESTLLIENEFVSGNEIISQQFKSKSKLNIDLLINQLDSISTSSLEFNFNNNNNTHCIAYIHQLEQIKTAFKFIKKDIIKSVESRFDLLFNEISSNNNNNDNDQDNIKLSKESPILELPRRVNIQWLSNKISICDYLSSNGTIDDCYKIINDLLQITSPKINSIESSKNNNNNNNNNNNNNNNNNNNNSKLSNKKENNEIKENKDTQSNLTKSTSQQQTKQTNNSYLIIIISVLVLMVAFYFKFFV</sequence>
<comment type="function">
    <text evidence="1">May play a role in the trafficking of a subset of G-protein coupled receptors.</text>
</comment>
<comment type="subcellular location">
    <subcellularLocation>
        <location evidence="4">Membrane</location>
        <topology evidence="4">Single-pass membrane protein</topology>
    </subcellularLocation>
</comment>
<comment type="similarity">
    <text evidence="4">Belongs to the ODR-4 family.</text>
</comment>
<reference key="1">
    <citation type="journal article" date="2005" name="Nature">
        <title>The genome of the social amoeba Dictyostelium discoideum.</title>
        <authorList>
            <person name="Eichinger L."/>
            <person name="Pachebat J.A."/>
            <person name="Gloeckner G."/>
            <person name="Rajandream M.A."/>
            <person name="Sucgang R."/>
            <person name="Berriman M."/>
            <person name="Song J."/>
            <person name="Olsen R."/>
            <person name="Szafranski K."/>
            <person name="Xu Q."/>
            <person name="Tunggal B."/>
            <person name="Kummerfeld S."/>
            <person name="Madera M."/>
            <person name="Konfortov B.A."/>
            <person name="Rivero F."/>
            <person name="Bankier A.T."/>
            <person name="Lehmann R."/>
            <person name="Hamlin N."/>
            <person name="Davies R."/>
            <person name="Gaudet P."/>
            <person name="Fey P."/>
            <person name="Pilcher K."/>
            <person name="Chen G."/>
            <person name="Saunders D."/>
            <person name="Sodergren E.J."/>
            <person name="Davis P."/>
            <person name="Kerhornou A."/>
            <person name="Nie X."/>
            <person name="Hall N."/>
            <person name="Anjard C."/>
            <person name="Hemphill L."/>
            <person name="Bason N."/>
            <person name="Farbrother P."/>
            <person name="Desany B."/>
            <person name="Just E."/>
            <person name="Morio T."/>
            <person name="Rost R."/>
            <person name="Churcher C.M."/>
            <person name="Cooper J."/>
            <person name="Haydock S."/>
            <person name="van Driessche N."/>
            <person name="Cronin A."/>
            <person name="Goodhead I."/>
            <person name="Muzny D.M."/>
            <person name="Mourier T."/>
            <person name="Pain A."/>
            <person name="Lu M."/>
            <person name="Harper D."/>
            <person name="Lindsay R."/>
            <person name="Hauser H."/>
            <person name="James K.D."/>
            <person name="Quiles M."/>
            <person name="Madan Babu M."/>
            <person name="Saito T."/>
            <person name="Buchrieser C."/>
            <person name="Wardroper A."/>
            <person name="Felder M."/>
            <person name="Thangavelu M."/>
            <person name="Johnson D."/>
            <person name="Knights A."/>
            <person name="Loulseged H."/>
            <person name="Mungall K.L."/>
            <person name="Oliver K."/>
            <person name="Price C."/>
            <person name="Quail M.A."/>
            <person name="Urushihara H."/>
            <person name="Hernandez J."/>
            <person name="Rabbinowitsch E."/>
            <person name="Steffen D."/>
            <person name="Sanders M."/>
            <person name="Ma J."/>
            <person name="Kohara Y."/>
            <person name="Sharp S."/>
            <person name="Simmonds M.N."/>
            <person name="Spiegler S."/>
            <person name="Tivey A."/>
            <person name="Sugano S."/>
            <person name="White B."/>
            <person name="Walker D."/>
            <person name="Woodward J.R."/>
            <person name="Winckler T."/>
            <person name="Tanaka Y."/>
            <person name="Shaulsky G."/>
            <person name="Schleicher M."/>
            <person name="Weinstock G.M."/>
            <person name="Rosenthal A."/>
            <person name="Cox E.C."/>
            <person name="Chisholm R.L."/>
            <person name="Gibbs R.A."/>
            <person name="Loomis W.F."/>
            <person name="Platzer M."/>
            <person name="Kay R.R."/>
            <person name="Williams J.G."/>
            <person name="Dear P.H."/>
            <person name="Noegel A.A."/>
            <person name="Barrell B.G."/>
            <person name="Kuspa A."/>
        </authorList>
    </citation>
    <scope>NUCLEOTIDE SEQUENCE [LARGE SCALE GENOMIC DNA]</scope>
    <source>
        <strain>AX4</strain>
    </source>
</reference>
<evidence type="ECO:0000250" key="1"/>
<evidence type="ECO:0000255" key="2"/>
<evidence type="ECO:0000256" key="3">
    <source>
        <dbReference type="SAM" id="MobiDB-lite"/>
    </source>
</evidence>
<evidence type="ECO:0000305" key="4"/>
<protein>
    <recommendedName>
        <fullName>Protein odr-4 homolog</fullName>
    </recommendedName>
</protein>
<accession>Q54QH3</accession>
<name>ODR4_DICDI</name>
<dbReference type="EMBL" id="AAFI02000057">
    <property type="protein sequence ID" value="EAL65529.1"/>
    <property type="molecule type" value="Genomic_DNA"/>
</dbReference>
<dbReference type="RefSeq" id="XP_638898.1">
    <property type="nucleotide sequence ID" value="XM_633806.1"/>
</dbReference>
<dbReference type="FunCoup" id="Q54QH3">
    <property type="interactions" value="119"/>
</dbReference>
<dbReference type="STRING" id="44689.Q54QH3"/>
<dbReference type="PaxDb" id="44689-DDB0185713"/>
<dbReference type="EnsemblProtists" id="EAL65529">
    <property type="protein sequence ID" value="EAL65529"/>
    <property type="gene ID" value="DDB_G0283829"/>
</dbReference>
<dbReference type="GeneID" id="8624295"/>
<dbReference type="KEGG" id="ddi:DDB_G0283829"/>
<dbReference type="dictyBase" id="DDB_G0283829"/>
<dbReference type="VEuPathDB" id="AmoebaDB:DDB_G0283829"/>
<dbReference type="eggNOG" id="ENOG502RD3I">
    <property type="taxonomic scope" value="Eukaryota"/>
</dbReference>
<dbReference type="HOGENOM" id="CLU_600548_0_0_1"/>
<dbReference type="InParanoid" id="Q54QH3"/>
<dbReference type="OMA" id="RRVNIQW"/>
<dbReference type="PhylomeDB" id="Q54QH3"/>
<dbReference type="PRO" id="PR:Q54QH3"/>
<dbReference type="Proteomes" id="UP000002195">
    <property type="component" value="Chromosome 4"/>
</dbReference>
<dbReference type="GO" id="GO:0016020">
    <property type="term" value="C:membrane"/>
    <property type="evidence" value="ECO:0007669"/>
    <property type="project" value="UniProtKB-SubCell"/>
</dbReference>
<dbReference type="GO" id="GO:0008104">
    <property type="term" value="P:protein localization"/>
    <property type="evidence" value="ECO:0000318"/>
    <property type="project" value="GO_Central"/>
</dbReference>
<dbReference type="InterPro" id="IPR029454">
    <property type="entry name" value="ODR-4-like"/>
</dbReference>
<dbReference type="PANTHER" id="PTHR33966">
    <property type="entry name" value="PROTEIN ODR-4 HOMOLOG"/>
    <property type="match status" value="1"/>
</dbReference>
<dbReference type="PANTHER" id="PTHR33966:SF1">
    <property type="entry name" value="PROTEIN ODR-4 HOMOLOG"/>
    <property type="match status" value="1"/>
</dbReference>
<dbReference type="Pfam" id="PF14778">
    <property type="entry name" value="ODR4-like"/>
    <property type="match status" value="1"/>
</dbReference>
<proteinExistence type="inferred from homology"/>
<keyword id="KW-0472">Membrane</keyword>
<keyword id="KW-1185">Reference proteome</keyword>
<keyword id="KW-0812">Transmembrane</keyword>
<keyword id="KW-1133">Transmembrane helix</keyword>
<organism>
    <name type="scientific">Dictyostelium discoideum</name>
    <name type="common">Social amoeba</name>
    <dbReference type="NCBI Taxonomy" id="44689"/>
    <lineage>
        <taxon>Eukaryota</taxon>
        <taxon>Amoebozoa</taxon>
        <taxon>Evosea</taxon>
        <taxon>Eumycetozoa</taxon>
        <taxon>Dictyostelia</taxon>
        <taxon>Dictyosteliales</taxon>
        <taxon>Dictyosteliaceae</taxon>
        <taxon>Dictyostelium</taxon>
    </lineage>
</organism>
<gene>
    <name type="ORF">DDB_G0283829</name>
</gene>